<name>ILVD_BACC3</name>
<feature type="chain" id="PRO_1000116499" description="Dihydroxy-acid dehydratase">
    <location>
        <begin position="1"/>
        <end position="557"/>
    </location>
</feature>
<feature type="active site" description="Proton acceptor" evidence="1">
    <location>
        <position position="468"/>
    </location>
</feature>
<feature type="binding site" evidence="1">
    <location>
        <position position="78"/>
    </location>
    <ligand>
        <name>Mg(2+)</name>
        <dbReference type="ChEBI" id="CHEBI:18420"/>
    </ligand>
</feature>
<feature type="binding site" evidence="1">
    <location>
        <position position="119"/>
    </location>
    <ligand>
        <name>[2Fe-2S] cluster</name>
        <dbReference type="ChEBI" id="CHEBI:190135"/>
    </ligand>
</feature>
<feature type="binding site" evidence="1">
    <location>
        <position position="120"/>
    </location>
    <ligand>
        <name>Mg(2+)</name>
        <dbReference type="ChEBI" id="CHEBI:18420"/>
    </ligand>
</feature>
<feature type="binding site" description="via carbamate group" evidence="1">
    <location>
        <position position="121"/>
    </location>
    <ligand>
        <name>Mg(2+)</name>
        <dbReference type="ChEBI" id="CHEBI:18420"/>
    </ligand>
</feature>
<feature type="binding site" evidence="1">
    <location>
        <position position="192"/>
    </location>
    <ligand>
        <name>[2Fe-2S] cluster</name>
        <dbReference type="ChEBI" id="CHEBI:190135"/>
    </ligand>
</feature>
<feature type="binding site" evidence="1">
    <location>
        <position position="442"/>
    </location>
    <ligand>
        <name>Mg(2+)</name>
        <dbReference type="ChEBI" id="CHEBI:18420"/>
    </ligand>
</feature>
<feature type="modified residue" description="N6-carboxylysine" evidence="1">
    <location>
        <position position="121"/>
    </location>
</feature>
<accession>C1EPL6</accession>
<gene>
    <name evidence="1" type="primary">ilvD</name>
    <name type="ordered locus">BCA_1859</name>
</gene>
<keyword id="KW-0001">2Fe-2S</keyword>
<keyword id="KW-0028">Amino-acid biosynthesis</keyword>
<keyword id="KW-0100">Branched-chain amino acid biosynthesis</keyword>
<keyword id="KW-0408">Iron</keyword>
<keyword id="KW-0411">Iron-sulfur</keyword>
<keyword id="KW-0456">Lyase</keyword>
<keyword id="KW-0460">Magnesium</keyword>
<keyword id="KW-0479">Metal-binding</keyword>
<reference key="1">
    <citation type="submission" date="2009-02" db="EMBL/GenBank/DDBJ databases">
        <title>Genome sequence of Bacillus cereus 03BB102.</title>
        <authorList>
            <person name="Dodson R.J."/>
            <person name="Jackson P."/>
            <person name="Munk A.C."/>
            <person name="Brettin T."/>
            <person name="Bruce D."/>
            <person name="Detter C."/>
            <person name="Tapia R."/>
            <person name="Han C."/>
            <person name="Sutton G."/>
            <person name="Sims D."/>
        </authorList>
    </citation>
    <scope>NUCLEOTIDE SEQUENCE [LARGE SCALE GENOMIC DNA]</scope>
    <source>
        <strain>03BB102</strain>
    </source>
</reference>
<sequence>MRSDMIKKGFDKAPHRSLLKATGLKDEDFDKPFIAICNSFIEIIPGHKHLNEFGKLVKEAVRAAGMVPFEFNTIGVDDGIAMGHIGMRYSLPSREIIADSVETVVNAHWFDGMICIPNCDKITPGMMMAALRINIPTVFVSGGPMAAGKTSKGDVVDLSSVFEGVGAYQSGKISEEELKDIEDHGCPSCGSCSGMFTANSMNCLCEVLGLALPGNGSILAIDPRREELIKQAAEKLKILIERDIKPRDIVTEEAIDDAFALDMAMGGSTNTVLHTLALAQEAGLDYDMNRIDAVSRRVPHLCKVSPASNWHMEDIDRAGGISAILKEMSRKEGVLHLDRITATGQTLRENIAHAEIKDKEVIHSLENPHSEEGGLRILKGNLAKDGAVIKSGATEVKRFEGPCVIFNSQDEALAGIMLGKVKKGDVVVIRYEGPRGGPGMPEMLAPTSAIAGMGLGADVALLTDGRFSGASRGISVGHISPEAAAGGTIALLEQGDIVCIDVEERLLEVRVSDEELDKRKKEWKRPEPKVKTGWLGRYAQMVTSANTGAVLKIPNFD</sequence>
<proteinExistence type="inferred from homology"/>
<dbReference type="EC" id="4.2.1.9" evidence="1"/>
<dbReference type="EMBL" id="CP001407">
    <property type="protein sequence ID" value="ACO26410.1"/>
    <property type="molecule type" value="Genomic_DNA"/>
</dbReference>
<dbReference type="RefSeq" id="WP_001255798.1">
    <property type="nucleotide sequence ID" value="NZ_CP009318.1"/>
</dbReference>
<dbReference type="SMR" id="C1EPL6"/>
<dbReference type="KEGG" id="bcx:BCA_1859"/>
<dbReference type="PATRIC" id="fig|572264.18.peg.1801"/>
<dbReference type="UniPathway" id="UPA00047">
    <property type="reaction ID" value="UER00057"/>
</dbReference>
<dbReference type="UniPathway" id="UPA00049">
    <property type="reaction ID" value="UER00061"/>
</dbReference>
<dbReference type="Proteomes" id="UP000002210">
    <property type="component" value="Chromosome"/>
</dbReference>
<dbReference type="GO" id="GO:0005829">
    <property type="term" value="C:cytosol"/>
    <property type="evidence" value="ECO:0007669"/>
    <property type="project" value="TreeGrafter"/>
</dbReference>
<dbReference type="GO" id="GO:0051537">
    <property type="term" value="F:2 iron, 2 sulfur cluster binding"/>
    <property type="evidence" value="ECO:0007669"/>
    <property type="project" value="UniProtKB-UniRule"/>
</dbReference>
<dbReference type="GO" id="GO:0004160">
    <property type="term" value="F:dihydroxy-acid dehydratase activity"/>
    <property type="evidence" value="ECO:0007669"/>
    <property type="project" value="UniProtKB-UniRule"/>
</dbReference>
<dbReference type="GO" id="GO:0000287">
    <property type="term" value="F:magnesium ion binding"/>
    <property type="evidence" value="ECO:0007669"/>
    <property type="project" value="UniProtKB-UniRule"/>
</dbReference>
<dbReference type="GO" id="GO:0009097">
    <property type="term" value="P:isoleucine biosynthetic process"/>
    <property type="evidence" value="ECO:0007669"/>
    <property type="project" value="UniProtKB-UniRule"/>
</dbReference>
<dbReference type="GO" id="GO:0009099">
    <property type="term" value="P:L-valine biosynthetic process"/>
    <property type="evidence" value="ECO:0007669"/>
    <property type="project" value="UniProtKB-UniRule"/>
</dbReference>
<dbReference type="FunFam" id="3.50.30.80:FF:000001">
    <property type="entry name" value="Dihydroxy-acid dehydratase"/>
    <property type="match status" value="1"/>
</dbReference>
<dbReference type="Gene3D" id="3.50.30.80">
    <property type="entry name" value="IlvD/EDD C-terminal domain-like"/>
    <property type="match status" value="1"/>
</dbReference>
<dbReference type="HAMAP" id="MF_00012">
    <property type="entry name" value="IlvD"/>
    <property type="match status" value="1"/>
</dbReference>
<dbReference type="InterPro" id="IPR042096">
    <property type="entry name" value="Dihydro-acid_dehy_C"/>
</dbReference>
<dbReference type="InterPro" id="IPR004404">
    <property type="entry name" value="DihydroxyA_deHydtase"/>
</dbReference>
<dbReference type="InterPro" id="IPR020558">
    <property type="entry name" value="DiOHA_6PGluconate_deHydtase_CS"/>
</dbReference>
<dbReference type="InterPro" id="IPR056740">
    <property type="entry name" value="ILV_EDD_C"/>
</dbReference>
<dbReference type="InterPro" id="IPR000581">
    <property type="entry name" value="ILV_EDD_N"/>
</dbReference>
<dbReference type="InterPro" id="IPR037237">
    <property type="entry name" value="IlvD/EDD_N"/>
</dbReference>
<dbReference type="NCBIfam" id="TIGR00110">
    <property type="entry name" value="ilvD"/>
    <property type="match status" value="1"/>
</dbReference>
<dbReference type="NCBIfam" id="NF002068">
    <property type="entry name" value="PRK00911.1"/>
    <property type="match status" value="1"/>
</dbReference>
<dbReference type="PANTHER" id="PTHR43661">
    <property type="entry name" value="D-XYLONATE DEHYDRATASE"/>
    <property type="match status" value="1"/>
</dbReference>
<dbReference type="PANTHER" id="PTHR43661:SF3">
    <property type="entry name" value="D-XYLONATE DEHYDRATASE YAGF-RELATED"/>
    <property type="match status" value="1"/>
</dbReference>
<dbReference type="Pfam" id="PF24877">
    <property type="entry name" value="ILV_EDD_C"/>
    <property type="match status" value="1"/>
</dbReference>
<dbReference type="Pfam" id="PF00920">
    <property type="entry name" value="ILVD_EDD_N"/>
    <property type="match status" value="1"/>
</dbReference>
<dbReference type="SUPFAM" id="SSF143975">
    <property type="entry name" value="IlvD/EDD N-terminal domain-like"/>
    <property type="match status" value="1"/>
</dbReference>
<dbReference type="SUPFAM" id="SSF52016">
    <property type="entry name" value="LeuD/IlvD-like"/>
    <property type="match status" value="1"/>
</dbReference>
<dbReference type="PROSITE" id="PS00886">
    <property type="entry name" value="ILVD_EDD_1"/>
    <property type="match status" value="1"/>
</dbReference>
<dbReference type="PROSITE" id="PS00887">
    <property type="entry name" value="ILVD_EDD_2"/>
    <property type="match status" value="1"/>
</dbReference>
<comment type="function">
    <text evidence="1">Functions in the biosynthesis of branched-chain amino acids. Catalyzes the dehydration of (2R,3R)-2,3-dihydroxy-3-methylpentanoate (2,3-dihydroxy-3-methylvalerate) into 2-oxo-3-methylpentanoate (2-oxo-3-methylvalerate) and of (2R)-2,3-dihydroxy-3-methylbutanoate (2,3-dihydroxyisovalerate) into 2-oxo-3-methylbutanoate (2-oxoisovalerate), the penultimate precursor to L-isoleucine and L-valine, respectively.</text>
</comment>
<comment type="catalytic activity">
    <reaction evidence="1">
        <text>(2R)-2,3-dihydroxy-3-methylbutanoate = 3-methyl-2-oxobutanoate + H2O</text>
        <dbReference type="Rhea" id="RHEA:24809"/>
        <dbReference type="ChEBI" id="CHEBI:11851"/>
        <dbReference type="ChEBI" id="CHEBI:15377"/>
        <dbReference type="ChEBI" id="CHEBI:49072"/>
        <dbReference type="EC" id="4.2.1.9"/>
    </reaction>
    <physiologicalReaction direction="left-to-right" evidence="1">
        <dbReference type="Rhea" id="RHEA:24810"/>
    </physiologicalReaction>
</comment>
<comment type="catalytic activity">
    <reaction evidence="1">
        <text>(2R,3R)-2,3-dihydroxy-3-methylpentanoate = (S)-3-methyl-2-oxopentanoate + H2O</text>
        <dbReference type="Rhea" id="RHEA:27694"/>
        <dbReference type="ChEBI" id="CHEBI:15377"/>
        <dbReference type="ChEBI" id="CHEBI:35146"/>
        <dbReference type="ChEBI" id="CHEBI:49258"/>
        <dbReference type="EC" id="4.2.1.9"/>
    </reaction>
    <physiologicalReaction direction="left-to-right" evidence="1">
        <dbReference type="Rhea" id="RHEA:27695"/>
    </physiologicalReaction>
</comment>
<comment type="cofactor">
    <cofactor evidence="1">
        <name>[2Fe-2S] cluster</name>
        <dbReference type="ChEBI" id="CHEBI:190135"/>
    </cofactor>
    <text evidence="1">Binds 1 [2Fe-2S] cluster per subunit. This cluster acts as a Lewis acid cofactor.</text>
</comment>
<comment type="cofactor">
    <cofactor evidence="1">
        <name>Mg(2+)</name>
        <dbReference type="ChEBI" id="CHEBI:18420"/>
    </cofactor>
</comment>
<comment type="pathway">
    <text evidence="1">Amino-acid biosynthesis; L-isoleucine biosynthesis; L-isoleucine from 2-oxobutanoate: step 3/4.</text>
</comment>
<comment type="pathway">
    <text evidence="1">Amino-acid biosynthesis; L-valine biosynthesis; L-valine from pyruvate: step 3/4.</text>
</comment>
<comment type="subunit">
    <text evidence="1">Homodimer.</text>
</comment>
<comment type="similarity">
    <text evidence="1">Belongs to the IlvD/Edd family.</text>
</comment>
<evidence type="ECO:0000255" key="1">
    <source>
        <dbReference type="HAMAP-Rule" id="MF_00012"/>
    </source>
</evidence>
<protein>
    <recommendedName>
        <fullName evidence="1">Dihydroxy-acid dehydratase</fullName>
        <shortName evidence="1">DAD</shortName>
        <ecNumber evidence="1">4.2.1.9</ecNumber>
    </recommendedName>
</protein>
<organism>
    <name type="scientific">Bacillus cereus (strain 03BB102)</name>
    <dbReference type="NCBI Taxonomy" id="572264"/>
    <lineage>
        <taxon>Bacteria</taxon>
        <taxon>Bacillati</taxon>
        <taxon>Bacillota</taxon>
        <taxon>Bacilli</taxon>
        <taxon>Bacillales</taxon>
        <taxon>Bacillaceae</taxon>
        <taxon>Bacillus</taxon>
        <taxon>Bacillus cereus group</taxon>
    </lineage>
</organism>